<sequence>MESIILSIAIFIGVLLGTSVGTFSGSGISAGVGASSGSGISAGVGASSGSSTSVGVGTFGGSSTSVGVGTFGGSSTSVGVGTFSGSRTSPDVDAGSGSSTSPDVGAGSGSSISAGVGTFSGSRTSPDVDAGSGSSTSPDVGAGSGSSISAGVGSRIGTGISTTMNARVAVLITAAILSAPVTAIALLEARR</sequence>
<keyword id="KW-0472">Membrane</keyword>
<keyword id="KW-0732">Signal</keyword>
<keyword id="KW-0812">Transmembrane</keyword>
<keyword id="KW-1133">Transmembrane helix</keyword>
<organism>
    <name type="scientific">Saccharomyces cerevisiae (strain ATCC 204508 / S288c)</name>
    <name type="common">Baker's yeast</name>
    <dbReference type="NCBI Taxonomy" id="559292"/>
    <lineage>
        <taxon>Eukaryota</taxon>
        <taxon>Fungi</taxon>
        <taxon>Dikarya</taxon>
        <taxon>Ascomycota</taxon>
        <taxon>Saccharomycotina</taxon>
        <taxon>Saccharomycetes</taxon>
        <taxon>Saccharomycetales</taxon>
        <taxon>Saccharomycetaceae</taxon>
        <taxon>Saccharomyces</taxon>
    </lineage>
</organism>
<reference key="1">
    <citation type="journal article" date="1997" name="Nature">
        <title>The nucleotide sequence of Saccharomyces cerevisiae chromosome XIV and its evolutionary implications.</title>
        <authorList>
            <person name="Philippsen P."/>
            <person name="Kleine K."/>
            <person name="Poehlmann R."/>
            <person name="Duesterhoeft A."/>
            <person name="Hamberg K."/>
            <person name="Hegemann J.H."/>
            <person name="Obermaier B."/>
            <person name="Urrestarazu L.A."/>
            <person name="Aert R."/>
            <person name="Albermann K."/>
            <person name="Altmann R."/>
            <person name="Andre B."/>
            <person name="Baladron V."/>
            <person name="Ballesta J.P.G."/>
            <person name="Becam A.-M."/>
            <person name="Beinhauer J.D."/>
            <person name="Boskovic J."/>
            <person name="Buitrago M.J."/>
            <person name="Bussereau F."/>
            <person name="Coster F."/>
            <person name="Crouzet M."/>
            <person name="D'Angelo M."/>
            <person name="Dal Pero F."/>
            <person name="De Antoni A."/>
            <person name="del Rey F."/>
            <person name="Doignon F."/>
            <person name="Domdey H."/>
            <person name="Dubois E."/>
            <person name="Fiedler T.A."/>
            <person name="Fleig U."/>
            <person name="Floeth M."/>
            <person name="Fritz C."/>
            <person name="Gaillardin C."/>
            <person name="Garcia-Cantalejo J.M."/>
            <person name="Glansdorff N."/>
            <person name="Goffeau A."/>
            <person name="Gueldener U."/>
            <person name="Herbert C.J."/>
            <person name="Heumann K."/>
            <person name="Heuss-Neitzel D."/>
            <person name="Hilbert H."/>
            <person name="Hinni K."/>
            <person name="Iraqui Houssaini I."/>
            <person name="Jacquet M."/>
            <person name="Jimenez A."/>
            <person name="Jonniaux J.-L."/>
            <person name="Karpfinger-Hartl L."/>
            <person name="Lanfranchi G."/>
            <person name="Lepingle A."/>
            <person name="Levesque H."/>
            <person name="Lyck R."/>
            <person name="Maftahi M."/>
            <person name="Mallet L."/>
            <person name="Maurer C.T.C."/>
            <person name="Messenguy F."/>
            <person name="Mewes H.-W."/>
            <person name="Moestl D."/>
            <person name="Nasr F."/>
            <person name="Nicaud J.-M."/>
            <person name="Niedenthal R.K."/>
            <person name="Pandolfo D."/>
            <person name="Pierard A."/>
            <person name="Piravandi E."/>
            <person name="Planta R.J."/>
            <person name="Pohl T.M."/>
            <person name="Purnelle B."/>
            <person name="Rebischung C."/>
            <person name="Remacha M.A."/>
            <person name="Revuelta J.L."/>
            <person name="Rinke M."/>
            <person name="Saiz J.E."/>
            <person name="Sartorello F."/>
            <person name="Scherens B."/>
            <person name="Sen-Gupta M."/>
            <person name="Soler-Mira A."/>
            <person name="Urbanus J.H.M."/>
            <person name="Valle G."/>
            <person name="Van Dyck L."/>
            <person name="Verhasselt P."/>
            <person name="Vierendeels F."/>
            <person name="Vissers S."/>
            <person name="Voet M."/>
            <person name="Volckaert G."/>
            <person name="Wach A."/>
            <person name="Wambutt R."/>
            <person name="Wedler H."/>
            <person name="Zollner A."/>
            <person name="Hani J."/>
        </authorList>
    </citation>
    <scope>NUCLEOTIDE SEQUENCE [LARGE SCALE GENOMIC DNA] (YNL339W-A)</scope>
    <source>
        <strain>ATCC 204508 / S288c</strain>
    </source>
</reference>
<reference key="2">
    <citation type="journal article" date="2014" name="G3 (Bethesda)">
        <title>The reference genome sequence of Saccharomyces cerevisiae: Then and now.</title>
        <authorList>
            <person name="Engel S.R."/>
            <person name="Dietrich F.S."/>
            <person name="Fisk D.G."/>
            <person name="Binkley G."/>
            <person name="Balakrishnan R."/>
            <person name="Costanzo M.C."/>
            <person name="Dwight S.S."/>
            <person name="Hitz B.C."/>
            <person name="Karra K."/>
            <person name="Nash R.S."/>
            <person name="Weng S."/>
            <person name="Wong E.D."/>
            <person name="Lloyd P."/>
            <person name="Skrzypek M.S."/>
            <person name="Miyasato S.R."/>
            <person name="Simison M."/>
            <person name="Cherry J.M."/>
        </authorList>
    </citation>
    <scope>GENOME REANNOTATION</scope>
    <source>
        <strain>ATCC 204508 / S288c</strain>
    </source>
</reference>
<reference key="3">
    <citation type="journal article" date="2002" name="Nat. Biotechnol.">
        <title>An integrated approach for finding overlooked genes in yeast.</title>
        <authorList>
            <person name="Kumar A."/>
            <person name="Harrison P.M."/>
            <person name="Cheung K.-H."/>
            <person name="Lan N."/>
            <person name="Echols N."/>
            <person name="Bertone P."/>
            <person name="Miller P."/>
            <person name="Gerstein M.B."/>
            <person name="Snyder M."/>
        </authorList>
    </citation>
    <scope>NUCLEOTIDE SEQUENCE [GENOMIC DNA]</scope>
</reference>
<evidence type="ECO:0000255" key="1"/>
<evidence type="ECO:0000256" key="2">
    <source>
        <dbReference type="SAM" id="MobiDB-lite"/>
    </source>
</evidence>
<evidence type="ECO:0000305" key="3"/>
<evidence type="ECO:0000305" key="4">
    <source>
    </source>
</evidence>
<comment type="subcellular location">
    <subcellularLocation>
        <location evidence="3">Membrane</location>
        <topology evidence="3">Single-pass membrane protein</topology>
    </subcellularLocation>
</comment>
<comment type="miscellaneous">
    <text evidence="3">Completely overlaps YRF1-6.</text>
</comment>
<comment type="caution">
    <text evidence="4">Product of a dubious gene prediction unlikely to encode a functional protein. Because of that it is not part of the S.cerevisiae S288c complete/reference proteome set.</text>
</comment>
<dbReference type="EMBL" id="Z71614">
    <property type="status" value="NOT_ANNOTATED_CDS"/>
    <property type="molecule type" value="Genomic_DNA"/>
</dbReference>
<dbReference type="EMBL" id="Z71615">
    <property type="status" value="NOT_ANNOTATED_CDS"/>
    <property type="molecule type" value="Genomic_DNA"/>
</dbReference>
<dbReference type="EMBL" id="AF479972">
    <property type="protein sequence ID" value="AAL79285.1"/>
    <property type="molecule type" value="Genomic_DNA"/>
</dbReference>
<dbReference type="EnsemblFungi" id="YER190C-A_mRNA">
    <property type="protein sequence ID" value="YER190C-A"/>
    <property type="gene ID" value="YER190C-A"/>
</dbReference>
<dbReference type="EnsemblFungi" id="YGR296C-A_mRNA">
    <property type="protein sequence ID" value="YGR296C-A"/>
    <property type="gene ID" value="YGR296C-A"/>
</dbReference>
<dbReference type="EnsemblFungi" id="YML133W-A_mRNA">
    <property type="protein sequence ID" value="YML133W-A"/>
    <property type="gene ID" value="YML133W-A"/>
</dbReference>
<dbReference type="EnsemblFungi" id="YNL339W-A_mRNA">
    <property type="protein sequence ID" value="YNL339W-A"/>
    <property type="gene ID" value="YNL339W-A"/>
</dbReference>
<dbReference type="EnsemblFungi" id="YPL283W-A_mRNA">
    <property type="protein sequence ID" value="YPL283W-A"/>
    <property type="gene ID" value="YPL283W-A"/>
</dbReference>
<dbReference type="AGR" id="SGD:S000028703"/>
<dbReference type="SGD" id="S000028703">
    <property type="gene designation" value="YNL339W-A"/>
</dbReference>
<dbReference type="HOGENOM" id="CLU_106419_0_0_1"/>
<dbReference type="OMA" id="CAHGATM"/>
<dbReference type="GO" id="GO:0016020">
    <property type="term" value="C:membrane"/>
    <property type="evidence" value="ECO:0007669"/>
    <property type="project" value="UniProtKB-SubCell"/>
</dbReference>
<accession>P0CL30</accession>
<accession>Q8TFA6</accession>
<name>YNL39_YEAST</name>
<gene>
    <name type="ordered locus">YNL339W-A</name>
</gene>
<feature type="signal peptide" evidence="1">
    <location>
        <begin position="1"/>
        <end position="17"/>
    </location>
</feature>
<feature type="chain" id="PRO_0000406007" description="Putative uncharacterized protein YNL339W-A">
    <location>
        <begin position="18"/>
        <end position="191"/>
    </location>
</feature>
<feature type="transmembrane region" description="Helical" evidence="1">
    <location>
        <begin position="168"/>
        <end position="188"/>
    </location>
</feature>
<feature type="region of interest" description="Disordered" evidence="2">
    <location>
        <begin position="82"/>
        <end position="148"/>
    </location>
</feature>
<proteinExistence type="uncertain"/>
<protein>
    <recommendedName>
        <fullName>Putative uncharacterized protein YNL339W-A</fullName>
    </recommendedName>
</protein>